<name>PURR_YERPY</name>
<proteinExistence type="inferred from homology"/>
<keyword id="KW-0238">DNA-binding</keyword>
<keyword id="KW-0658">Purine biosynthesis</keyword>
<keyword id="KW-0678">Repressor</keyword>
<keyword id="KW-0804">Transcription</keyword>
<keyword id="KW-0805">Transcription regulation</keyword>
<evidence type="ECO:0000255" key="1">
    <source>
        <dbReference type="HAMAP-Rule" id="MF_01277"/>
    </source>
</evidence>
<feature type="chain" id="PRO_1000140309" description="HTH-type transcriptional repressor PurR">
    <location>
        <begin position="1"/>
        <end position="341"/>
    </location>
</feature>
<feature type="domain" description="HTH lacI-type" evidence="1">
    <location>
        <begin position="2"/>
        <end position="56"/>
    </location>
</feature>
<feature type="DNA-binding region" description="H-T-H motif" evidence="1">
    <location>
        <begin position="4"/>
        <end position="23"/>
    </location>
</feature>
<feature type="DNA-binding region" evidence="1">
    <location>
        <begin position="48"/>
        <end position="56"/>
    </location>
</feature>
<feature type="binding site" evidence="1">
    <location>
        <position position="73"/>
    </location>
    <ligand>
        <name>hypoxanthine</name>
        <dbReference type="ChEBI" id="CHEBI:17368"/>
    </ligand>
</feature>
<feature type="binding site" evidence="1">
    <location>
        <position position="190"/>
    </location>
    <ligand>
        <name>hypoxanthine</name>
        <dbReference type="ChEBI" id="CHEBI:17368"/>
    </ligand>
</feature>
<feature type="binding site" evidence="1">
    <location>
        <position position="192"/>
    </location>
    <ligand>
        <name>hypoxanthine</name>
        <dbReference type="ChEBI" id="CHEBI:17368"/>
    </ligand>
</feature>
<feature type="binding site" evidence="1">
    <location>
        <position position="221"/>
    </location>
    <ligand>
        <name>hypoxanthine</name>
        <dbReference type="ChEBI" id="CHEBI:17368"/>
    </ligand>
</feature>
<feature type="binding site" evidence="1">
    <location>
        <position position="275"/>
    </location>
    <ligand>
        <name>hypoxanthine</name>
        <dbReference type="ChEBI" id="CHEBI:17368"/>
    </ligand>
</feature>
<reference key="1">
    <citation type="submission" date="2008-02" db="EMBL/GenBank/DDBJ databases">
        <title>Complete sequence of Yersinia pseudotuberculosis YPIII.</title>
        <authorList>
            <consortium name="US DOE Joint Genome Institute"/>
            <person name="Copeland A."/>
            <person name="Lucas S."/>
            <person name="Lapidus A."/>
            <person name="Glavina del Rio T."/>
            <person name="Dalin E."/>
            <person name="Tice H."/>
            <person name="Bruce D."/>
            <person name="Goodwin L."/>
            <person name="Pitluck S."/>
            <person name="Munk A.C."/>
            <person name="Brettin T."/>
            <person name="Detter J.C."/>
            <person name="Han C."/>
            <person name="Tapia R."/>
            <person name="Schmutz J."/>
            <person name="Larimer F."/>
            <person name="Land M."/>
            <person name="Hauser L."/>
            <person name="Challacombe J.F."/>
            <person name="Green L."/>
            <person name="Lindler L.E."/>
            <person name="Nikolich M.P."/>
            <person name="Richardson P."/>
        </authorList>
    </citation>
    <scope>NUCLEOTIDE SEQUENCE [LARGE SCALE GENOMIC DNA]</scope>
    <source>
        <strain>YPIII</strain>
    </source>
</reference>
<gene>
    <name evidence="1" type="primary">purR</name>
    <name type="ordered locus">YPK_1862</name>
</gene>
<sequence>MATIKDVAKHAGVSTTTVSHVINKTRFVAENTKAAVWAAIKELHYSPSAVARSLKVNHTKSIGLLATSSEAPYFAEVIEAVENSCYSKGYTLILCNSHNNLDKQKAYLAMLAQKRVDGLLVMCSEYPDQLLGMLEDYRNIPMVVMDWGTARGDFTDSIIDNAFEGGYLAGRYLIERGHRDIGAIPGQLARNTGGGRHQGFLKALEEANIPVREEWIVQGDFEPESGYKAMHQILTQKHRPTAVFCGGDIMAMGAICAADELGLRVPQDISVIGYDNVRNARYFSPALTTIHQPKERLGETAFAMLLDRIVSKREDPQTIEVHPKLVERRSVADGPFRDYRR</sequence>
<comment type="function">
    <text evidence="1">Is the main repressor of the genes involved in the de novo synthesis of purine nucleotides, regulating purB, purC, purEK, purF, purHD, purL, purMN and guaBA expression. PurR is allosterically activated to bind its cognate DNA by binding the purine corepressors, hypoxanthine or guanine, thereby effecting transcription repression.</text>
</comment>
<comment type="pathway">
    <text>Purine metabolism; purine nucleotide biosynthesis [regulation].</text>
</comment>
<comment type="subunit">
    <text evidence="1">Homodimer.</text>
</comment>
<comment type="domain">
    <text evidence="1">Consists of two structural and functional domains: an N-terminal DNA-binding domain, approximately the first 60 residues, and a larger C-terminal domain, approximately 280 residues, which imparts the function of corepressor binding and oligomerization.</text>
</comment>
<accession>B1JJ59</accession>
<dbReference type="EMBL" id="CP000950">
    <property type="protein sequence ID" value="ACA68153.1"/>
    <property type="molecule type" value="Genomic_DNA"/>
</dbReference>
<dbReference type="RefSeq" id="WP_002210943.1">
    <property type="nucleotide sequence ID" value="NZ_CP009792.1"/>
</dbReference>
<dbReference type="SMR" id="B1JJ59"/>
<dbReference type="GeneID" id="57976289"/>
<dbReference type="KEGG" id="ypy:YPK_1862"/>
<dbReference type="PATRIC" id="fig|502800.11.peg.2532"/>
<dbReference type="UniPathway" id="UPA00488"/>
<dbReference type="GO" id="GO:0003700">
    <property type="term" value="F:DNA-binding transcription factor activity"/>
    <property type="evidence" value="ECO:0007669"/>
    <property type="project" value="TreeGrafter"/>
</dbReference>
<dbReference type="GO" id="GO:0000976">
    <property type="term" value="F:transcription cis-regulatory region binding"/>
    <property type="evidence" value="ECO:0007669"/>
    <property type="project" value="TreeGrafter"/>
</dbReference>
<dbReference type="GO" id="GO:0045892">
    <property type="term" value="P:negative regulation of DNA-templated transcription"/>
    <property type="evidence" value="ECO:0007669"/>
    <property type="project" value="UniProtKB-UniRule"/>
</dbReference>
<dbReference type="GO" id="GO:0006164">
    <property type="term" value="P:purine nucleotide biosynthetic process"/>
    <property type="evidence" value="ECO:0007669"/>
    <property type="project" value="UniProtKB-UniPathway"/>
</dbReference>
<dbReference type="CDD" id="cd01392">
    <property type="entry name" value="HTH_LacI"/>
    <property type="match status" value="1"/>
</dbReference>
<dbReference type="CDD" id="cd06275">
    <property type="entry name" value="PBP1_PurR"/>
    <property type="match status" value="1"/>
</dbReference>
<dbReference type="FunFam" id="1.10.260.40:FF:000002">
    <property type="entry name" value="HTH-type transcriptional repressor PurR"/>
    <property type="match status" value="1"/>
</dbReference>
<dbReference type="FunFam" id="3.40.50.2300:FF:000045">
    <property type="entry name" value="HTH-type transcriptional repressor PurR"/>
    <property type="match status" value="1"/>
</dbReference>
<dbReference type="Gene3D" id="3.40.50.2300">
    <property type="match status" value="2"/>
</dbReference>
<dbReference type="Gene3D" id="1.10.260.40">
    <property type="entry name" value="lambda repressor-like DNA-binding domains"/>
    <property type="match status" value="1"/>
</dbReference>
<dbReference type="HAMAP" id="MF_01277">
    <property type="entry name" value="HTH_type_PurR"/>
    <property type="match status" value="1"/>
</dbReference>
<dbReference type="InterPro" id="IPR000843">
    <property type="entry name" value="HTH_LacI"/>
</dbReference>
<dbReference type="InterPro" id="IPR046335">
    <property type="entry name" value="LacI/GalR-like_sensor"/>
</dbReference>
<dbReference type="InterPro" id="IPR010982">
    <property type="entry name" value="Lambda_DNA-bd_dom_sf"/>
</dbReference>
<dbReference type="InterPro" id="IPR028082">
    <property type="entry name" value="Peripla_BP_I"/>
</dbReference>
<dbReference type="InterPro" id="IPR023588">
    <property type="entry name" value="Tscrpt_reg_HTH_PurR"/>
</dbReference>
<dbReference type="NCBIfam" id="NF007979">
    <property type="entry name" value="PRK10703.1"/>
    <property type="match status" value="1"/>
</dbReference>
<dbReference type="PANTHER" id="PTHR30146:SF148">
    <property type="entry name" value="HTH-TYPE TRANSCRIPTIONAL REPRESSOR PURR-RELATED"/>
    <property type="match status" value="1"/>
</dbReference>
<dbReference type="PANTHER" id="PTHR30146">
    <property type="entry name" value="LACI-RELATED TRANSCRIPTIONAL REPRESSOR"/>
    <property type="match status" value="1"/>
</dbReference>
<dbReference type="Pfam" id="PF00356">
    <property type="entry name" value="LacI"/>
    <property type="match status" value="1"/>
</dbReference>
<dbReference type="Pfam" id="PF13377">
    <property type="entry name" value="Peripla_BP_3"/>
    <property type="match status" value="1"/>
</dbReference>
<dbReference type="PRINTS" id="PR00036">
    <property type="entry name" value="HTHLACI"/>
</dbReference>
<dbReference type="SMART" id="SM00354">
    <property type="entry name" value="HTH_LACI"/>
    <property type="match status" value="1"/>
</dbReference>
<dbReference type="SUPFAM" id="SSF47413">
    <property type="entry name" value="lambda repressor-like DNA-binding domains"/>
    <property type="match status" value="1"/>
</dbReference>
<dbReference type="SUPFAM" id="SSF53822">
    <property type="entry name" value="Periplasmic binding protein-like I"/>
    <property type="match status" value="1"/>
</dbReference>
<dbReference type="PROSITE" id="PS00356">
    <property type="entry name" value="HTH_LACI_1"/>
    <property type="match status" value="1"/>
</dbReference>
<dbReference type="PROSITE" id="PS50932">
    <property type="entry name" value="HTH_LACI_2"/>
    <property type="match status" value="1"/>
</dbReference>
<organism>
    <name type="scientific">Yersinia pseudotuberculosis serotype O:3 (strain YPIII)</name>
    <dbReference type="NCBI Taxonomy" id="502800"/>
    <lineage>
        <taxon>Bacteria</taxon>
        <taxon>Pseudomonadati</taxon>
        <taxon>Pseudomonadota</taxon>
        <taxon>Gammaproteobacteria</taxon>
        <taxon>Enterobacterales</taxon>
        <taxon>Yersiniaceae</taxon>
        <taxon>Yersinia</taxon>
    </lineage>
</organism>
<protein>
    <recommendedName>
        <fullName evidence="1">HTH-type transcriptional repressor PurR</fullName>
    </recommendedName>
    <alternativeName>
        <fullName evidence="1">Pur regulon repressor</fullName>
    </alternativeName>
    <alternativeName>
        <fullName evidence="1">Purine nucleotide synthesis repressor</fullName>
    </alternativeName>
</protein>